<feature type="chain" id="PRO_1000010690" description="Elongation factor P">
    <location>
        <begin position="1"/>
        <end position="192"/>
    </location>
</feature>
<gene>
    <name evidence="1" type="primary">efp</name>
    <name type="ordered locus">BAPKO_0222</name>
    <name type="ordered locus">BafPKo_0215</name>
</gene>
<name>EFP_BORAP</name>
<evidence type="ECO:0000255" key="1">
    <source>
        <dbReference type="HAMAP-Rule" id="MF_00141"/>
    </source>
</evidence>
<protein>
    <recommendedName>
        <fullName evidence="1">Elongation factor P</fullName>
        <shortName evidence="1">EF-P</shortName>
    </recommendedName>
</protein>
<organism>
    <name type="scientific">Borreliella afzelii (strain PKo)</name>
    <name type="common">Borrelia afzelii</name>
    <dbReference type="NCBI Taxonomy" id="390236"/>
    <lineage>
        <taxon>Bacteria</taxon>
        <taxon>Pseudomonadati</taxon>
        <taxon>Spirochaetota</taxon>
        <taxon>Spirochaetia</taxon>
        <taxon>Spirochaetales</taxon>
        <taxon>Borreliaceae</taxon>
        <taxon>Borreliella</taxon>
    </lineage>
</organism>
<sequence length="192" mass="21562">MAVVKSSEIEKGSFLLIKGAPHIVLEREFSKTGRGGAIVRLKLKNLKNKFVIRETLKGADTAEAIEIYEASVQYLYKDKDVLVFMDLETYDQISLDLKENANFQDKVLFLQESEIYSLIMFDNVVIDIKLAPKIAFEVVEVEAAVKGDTVTNAMKNITLNTGLIIKAPLFINVGDKVLVNSETKEYAERIKN</sequence>
<reference key="1">
    <citation type="journal article" date="2006" name="BMC Genomics">
        <title>Comparative genome analysis: selection pressure on the Borrelia vls cassettes is essential for infectivity.</title>
        <authorList>
            <person name="Gloeckner G."/>
            <person name="Schulte-Spechtel U."/>
            <person name="Schilhabel M."/>
            <person name="Felder M."/>
            <person name="Suehnel J."/>
            <person name="Wilske B."/>
            <person name="Platzer M."/>
        </authorList>
    </citation>
    <scope>NUCLEOTIDE SEQUENCE [LARGE SCALE GENOMIC DNA]</scope>
    <source>
        <strain>PKo</strain>
    </source>
</reference>
<reference key="2">
    <citation type="journal article" date="2011" name="J. Bacteriol.">
        <title>Whole-genome sequences of two Borrelia afzelii and two Borrelia garinii Lyme disease agent isolates.</title>
        <authorList>
            <person name="Casjens S.R."/>
            <person name="Mongodin E.F."/>
            <person name="Qiu W.G."/>
            <person name="Dunn J.J."/>
            <person name="Luft B.J."/>
            <person name="Fraser-Liggett C.M."/>
            <person name="Schutzer S.E."/>
        </authorList>
    </citation>
    <scope>NUCLEOTIDE SEQUENCE [LARGE SCALE GENOMIC DNA]</scope>
    <source>
        <strain>PKo</strain>
    </source>
</reference>
<accession>Q0SNU8</accession>
<accession>G0IR56</accession>
<keyword id="KW-0963">Cytoplasm</keyword>
<keyword id="KW-0251">Elongation factor</keyword>
<keyword id="KW-0648">Protein biosynthesis</keyword>
<dbReference type="EMBL" id="CP000395">
    <property type="protein sequence ID" value="ABH01480.1"/>
    <property type="molecule type" value="Genomic_DNA"/>
</dbReference>
<dbReference type="EMBL" id="CP002933">
    <property type="protein sequence ID" value="AEL69442.1"/>
    <property type="molecule type" value="Genomic_DNA"/>
</dbReference>
<dbReference type="RefSeq" id="WP_004790140.1">
    <property type="nucleotide sequence ID" value="NZ_CP160066.1"/>
</dbReference>
<dbReference type="SMR" id="Q0SNU8"/>
<dbReference type="STRING" id="29518.BLA32_03225"/>
<dbReference type="GeneID" id="77265056"/>
<dbReference type="KEGG" id="baf:BAPKO_0222"/>
<dbReference type="KEGG" id="bafz:BafPKo_0215"/>
<dbReference type="PATRIC" id="fig|390236.22.peg.210"/>
<dbReference type="eggNOG" id="COG0231">
    <property type="taxonomic scope" value="Bacteria"/>
</dbReference>
<dbReference type="HOGENOM" id="CLU_074944_0_2_12"/>
<dbReference type="OrthoDB" id="9801844at2"/>
<dbReference type="UniPathway" id="UPA00345"/>
<dbReference type="Proteomes" id="UP000005216">
    <property type="component" value="Chromosome"/>
</dbReference>
<dbReference type="GO" id="GO:0005737">
    <property type="term" value="C:cytoplasm"/>
    <property type="evidence" value="ECO:0007669"/>
    <property type="project" value="UniProtKB-SubCell"/>
</dbReference>
<dbReference type="GO" id="GO:0003746">
    <property type="term" value="F:translation elongation factor activity"/>
    <property type="evidence" value="ECO:0007669"/>
    <property type="project" value="UniProtKB-UniRule"/>
</dbReference>
<dbReference type="GO" id="GO:0043043">
    <property type="term" value="P:peptide biosynthetic process"/>
    <property type="evidence" value="ECO:0007669"/>
    <property type="project" value="InterPro"/>
</dbReference>
<dbReference type="CDD" id="cd05794">
    <property type="entry name" value="S1_EF-P_repeat_2"/>
    <property type="match status" value="1"/>
</dbReference>
<dbReference type="FunFam" id="2.40.50.140:FF:000004">
    <property type="entry name" value="Elongation factor P"/>
    <property type="match status" value="1"/>
</dbReference>
<dbReference type="Gene3D" id="2.30.30.30">
    <property type="match status" value="1"/>
</dbReference>
<dbReference type="Gene3D" id="2.40.50.140">
    <property type="entry name" value="Nucleic acid-binding proteins"/>
    <property type="match status" value="2"/>
</dbReference>
<dbReference type="HAMAP" id="MF_00141">
    <property type="entry name" value="EF_P"/>
    <property type="match status" value="1"/>
</dbReference>
<dbReference type="InterPro" id="IPR015365">
    <property type="entry name" value="Elong-fact-P_C"/>
</dbReference>
<dbReference type="InterPro" id="IPR012340">
    <property type="entry name" value="NA-bd_OB-fold"/>
</dbReference>
<dbReference type="InterPro" id="IPR014722">
    <property type="entry name" value="Rib_uL2_dom2"/>
</dbReference>
<dbReference type="InterPro" id="IPR020599">
    <property type="entry name" value="Transl_elong_fac_P/YeiP"/>
</dbReference>
<dbReference type="InterPro" id="IPR013185">
    <property type="entry name" value="Transl_elong_KOW-like"/>
</dbReference>
<dbReference type="InterPro" id="IPR001059">
    <property type="entry name" value="Transl_elong_P/YeiP_cen"/>
</dbReference>
<dbReference type="InterPro" id="IPR011768">
    <property type="entry name" value="Transl_elongation_fac_P"/>
</dbReference>
<dbReference type="InterPro" id="IPR008991">
    <property type="entry name" value="Translation_prot_SH3-like_sf"/>
</dbReference>
<dbReference type="NCBIfam" id="TIGR00038">
    <property type="entry name" value="efp"/>
    <property type="match status" value="1"/>
</dbReference>
<dbReference type="NCBIfam" id="NF001810">
    <property type="entry name" value="PRK00529.1"/>
    <property type="match status" value="1"/>
</dbReference>
<dbReference type="PANTHER" id="PTHR30053">
    <property type="entry name" value="ELONGATION FACTOR P"/>
    <property type="match status" value="1"/>
</dbReference>
<dbReference type="PANTHER" id="PTHR30053:SF14">
    <property type="entry name" value="TRANSLATION ELONGATION FACTOR KOW-LIKE DOMAIN-CONTAINING PROTEIN"/>
    <property type="match status" value="1"/>
</dbReference>
<dbReference type="Pfam" id="PF01132">
    <property type="entry name" value="EFP"/>
    <property type="match status" value="1"/>
</dbReference>
<dbReference type="Pfam" id="PF08207">
    <property type="entry name" value="EFP_N"/>
    <property type="match status" value="1"/>
</dbReference>
<dbReference type="Pfam" id="PF09285">
    <property type="entry name" value="Elong-fact-P_C"/>
    <property type="match status" value="1"/>
</dbReference>
<dbReference type="PIRSF" id="PIRSF005901">
    <property type="entry name" value="EF-P"/>
    <property type="match status" value="1"/>
</dbReference>
<dbReference type="SMART" id="SM01185">
    <property type="entry name" value="EFP"/>
    <property type="match status" value="1"/>
</dbReference>
<dbReference type="SMART" id="SM00841">
    <property type="entry name" value="Elong-fact-P_C"/>
    <property type="match status" value="1"/>
</dbReference>
<dbReference type="SUPFAM" id="SSF50249">
    <property type="entry name" value="Nucleic acid-binding proteins"/>
    <property type="match status" value="2"/>
</dbReference>
<dbReference type="SUPFAM" id="SSF50104">
    <property type="entry name" value="Translation proteins SH3-like domain"/>
    <property type="match status" value="1"/>
</dbReference>
<comment type="function">
    <text evidence="1">Involved in peptide bond synthesis. Stimulates efficient translation and peptide-bond synthesis on native or reconstituted 70S ribosomes in vitro. Probably functions indirectly by altering the affinity of the ribosome for aminoacyl-tRNA, thus increasing their reactivity as acceptors for peptidyl transferase.</text>
</comment>
<comment type="pathway">
    <text evidence="1">Protein biosynthesis; polypeptide chain elongation.</text>
</comment>
<comment type="subcellular location">
    <subcellularLocation>
        <location evidence="1">Cytoplasm</location>
    </subcellularLocation>
</comment>
<comment type="similarity">
    <text evidence="1">Belongs to the elongation factor P family.</text>
</comment>
<proteinExistence type="inferred from homology"/>